<organism>
    <name type="scientific">Tetrahymena pyriformis</name>
    <dbReference type="NCBI Taxonomy" id="5908"/>
    <lineage>
        <taxon>Eukaryota</taxon>
        <taxon>Sar</taxon>
        <taxon>Alveolata</taxon>
        <taxon>Ciliophora</taxon>
        <taxon>Intramacronucleata</taxon>
        <taxon>Oligohymenophorea</taxon>
        <taxon>Hymenostomatida</taxon>
        <taxon>Tetrahymenina</taxon>
        <taxon>Tetrahymenidae</taxon>
        <taxon>Tetrahymena</taxon>
    </lineage>
</organism>
<reference key="1">
    <citation type="journal article" date="1994" name="J. Biol. Chem.">
        <title>A Tetrahymena orthologue of the mouse chaperonin subunit CCT gamma and its coexpression with tubulin during cilia recovery.</title>
        <authorList>
            <person name="Soares H."/>
            <person name="Penque D."/>
            <person name="Mouta C."/>
            <person name="Rodrigues-Pousada C."/>
        </authorList>
    </citation>
    <scope>NUCLEOTIDE SEQUENCE [GENOMIC DNA]</scope>
    <source>
        <strain>CGL</strain>
    </source>
</reference>
<evidence type="ECO:0000250" key="1"/>
<evidence type="ECO:0000256" key="2">
    <source>
        <dbReference type="SAM" id="MobiDB-lite"/>
    </source>
</evidence>
<evidence type="ECO:0000305" key="3"/>
<feature type="chain" id="PRO_0000128329" description="T-complex protein 1 subunit gamma">
    <location>
        <begin position="1"/>
        <end position="559"/>
    </location>
</feature>
<feature type="region of interest" description="Disordered" evidence="2">
    <location>
        <begin position="537"/>
        <end position="559"/>
    </location>
</feature>
<feature type="disulfide bond" evidence="1">
    <location>
        <begin position="369"/>
        <end position="375"/>
    </location>
</feature>
<keyword id="KW-0067">ATP-binding</keyword>
<keyword id="KW-0143">Chaperone</keyword>
<keyword id="KW-0963">Cytoplasm</keyword>
<keyword id="KW-1015">Disulfide bond</keyword>
<keyword id="KW-0547">Nucleotide-binding</keyword>
<accession>P54408</accession>
<name>TCPG_TETPY</name>
<proteinExistence type="inferred from homology"/>
<sequence length="559" mass="61616">MFQGGHQPIMVLNQNTKRESGKKAQLANISASKAVSEIVTSTLGPRSMLKMLLDPMGGIVMTNDGNAILREIDVNHPAAKSMIELARVQDEEVGDGTTSVIIMAGEMMSAAKPFIERDIHPSIIVTAYYRALEESIKKIEELAVPIDVNNDDQVNKALSSCIGTKFTSRWGKLITDLALKAVRTIMRGGNLQKLNLEIKRYAKVEKIPGGTLEDSVVLDGVMFNKDITHPKMRRFIKNPRVILLDCPLEYKKGESMTNLEMMKETDMTDALQQEMEELALMCNDILKHKPDVVITEKGVSDLAQHYLLKQNVSVIRRVRKTDNNRISRVSGATIVNRPEEIQESDVGKKCGLFEVKLIGDEYFTFMTECENPEACSIILRGASKDVLNEMERNLHDCLAVAKNIFVNPKLVPGGGAIEMEVSSHLEKISSSIEGLHQLPFRAVAYALEAIPKTLAQNCGVDVVRNITELRAKHNQEGNKFIGIEGNSGKITDMGEANVWEPIAVKLQVYKTAIESACMLLRIDDVVSGLKKQKVAKGGASVTDGNGQEIPETFGDARDG</sequence>
<dbReference type="EMBL" id="Z34885">
    <property type="protein sequence ID" value="CAA84368.1"/>
    <property type="molecule type" value="Genomic_DNA"/>
</dbReference>
<dbReference type="PIR" id="A55423">
    <property type="entry name" value="A55423"/>
</dbReference>
<dbReference type="SMR" id="P54408"/>
<dbReference type="GO" id="GO:0005832">
    <property type="term" value="C:chaperonin-containing T-complex"/>
    <property type="evidence" value="ECO:0007669"/>
    <property type="project" value="UniProtKB-ARBA"/>
</dbReference>
<dbReference type="GO" id="GO:0005524">
    <property type="term" value="F:ATP binding"/>
    <property type="evidence" value="ECO:0007669"/>
    <property type="project" value="UniProtKB-KW"/>
</dbReference>
<dbReference type="GO" id="GO:0016887">
    <property type="term" value="F:ATP hydrolysis activity"/>
    <property type="evidence" value="ECO:0007669"/>
    <property type="project" value="InterPro"/>
</dbReference>
<dbReference type="GO" id="GO:0140662">
    <property type="term" value="F:ATP-dependent protein folding chaperone"/>
    <property type="evidence" value="ECO:0007669"/>
    <property type="project" value="InterPro"/>
</dbReference>
<dbReference type="GO" id="GO:0051082">
    <property type="term" value="F:unfolded protein binding"/>
    <property type="evidence" value="ECO:0007669"/>
    <property type="project" value="InterPro"/>
</dbReference>
<dbReference type="CDD" id="cd03337">
    <property type="entry name" value="TCP1_gamma"/>
    <property type="match status" value="1"/>
</dbReference>
<dbReference type="FunFam" id="1.10.560.10:FF:000017">
    <property type="entry name" value="T-complex protein 1 subunit eta"/>
    <property type="match status" value="1"/>
</dbReference>
<dbReference type="FunFam" id="1.10.560.10:FF:000085">
    <property type="entry name" value="T-complex protein 1 subunit gamma"/>
    <property type="match status" value="1"/>
</dbReference>
<dbReference type="FunFam" id="3.50.7.10:FF:000005">
    <property type="entry name" value="T-complex protein 1 subunit gamma"/>
    <property type="match status" value="1"/>
</dbReference>
<dbReference type="Gene3D" id="3.50.7.10">
    <property type="entry name" value="GroEL"/>
    <property type="match status" value="1"/>
</dbReference>
<dbReference type="Gene3D" id="1.10.560.10">
    <property type="entry name" value="GroEL-like equatorial domain"/>
    <property type="match status" value="1"/>
</dbReference>
<dbReference type="Gene3D" id="3.30.260.10">
    <property type="entry name" value="TCP-1-like chaperonin intermediate domain"/>
    <property type="match status" value="1"/>
</dbReference>
<dbReference type="InterPro" id="IPR012719">
    <property type="entry name" value="Chap_CCT_gamma"/>
</dbReference>
<dbReference type="InterPro" id="IPR017998">
    <property type="entry name" value="Chaperone_TCP-1"/>
</dbReference>
<dbReference type="InterPro" id="IPR002194">
    <property type="entry name" value="Chaperonin_TCP-1_CS"/>
</dbReference>
<dbReference type="InterPro" id="IPR002423">
    <property type="entry name" value="Cpn60/GroEL/TCP-1"/>
</dbReference>
<dbReference type="InterPro" id="IPR027409">
    <property type="entry name" value="GroEL-like_apical_dom_sf"/>
</dbReference>
<dbReference type="InterPro" id="IPR027413">
    <property type="entry name" value="GROEL-like_equatorial_sf"/>
</dbReference>
<dbReference type="InterPro" id="IPR027410">
    <property type="entry name" value="TCP-1-like_intermed_sf"/>
</dbReference>
<dbReference type="InterPro" id="IPR053374">
    <property type="entry name" value="TCP-1_chaperonin"/>
</dbReference>
<dbReference type="InterPro" id="IPR054827">
    <property type="entry name" value="thermosome_alpha"/>
</dbReference>
<dbReference type="NCBIfam" id="TIGR02344">
    <property type="entry name" value="chap_CCT_gamma"/>
    <property type="match status" value="1"/>
</dbReference>
<dbReference type="NCBIfam" id="NF041082">
    <property type="entry name" value="thermosome_alpha"/>
    <property type="match status" value="1"/>
</dbReference>
<dbReference type="NCBIfam" id="NF041083">
    <property type="entry name" value="thermosome_beta"/>
    <property type="match status" value="1"/>
</dbReference>
<dbReference type="PANTHER" id="PTHR11353">
    <property type="entry name" value="CHAPERONIN"/>
    <property type="match status" value="1"/>
</dbReference>
<dbReference type="Pfam" id="PF00118">
    <property type="entry name" value="Cpn60_TCP1"/>
    <property type="match status" value="1"/>
</dbReference>
<dbReference type="PRINTS" id="PR00304">
    <property type="entry name" value="TCOMPLEXTCP1"/>
</dbReference>
<dbReference type="SUPFAM" id="SSF52029">
    <property type="entry name" value="GroEL apical domain-like"/>
    <property type="match status" value="1"/>
</dbReference>
<dbReference type="SUPFAM" id="SSF48592">
    <property type="entry name" value="GroEL equatorial domain-like"/>
    <property type="match status" value="1"/>
</dbReference>
<dbReference type="SUPFAM" id="SSF54849">
    <property type="entry name" value="GroEL-intermediate domain like"/>
    <property type="match status" value="1"/>
</dbReference>
<dbReference type="PROSITE" id="PS00751">
    <property type="entry name" value="TCP1_2"/>
    <property type="match status" value="1"/>
</dbReference>
<dbReference type="PROSITE" id="PS00995">
    <property type="entry name" value="TCP1_3"/>
    <property type="match status" value="1"/>
</dbReference>
<comment type="function">
    <text>Molecular chaperone; assists the folding of proteins upon ATP hydrolysis. Known to play a role, in vitro, in the folding of actin and tubulin.</text>
</comment>
<comment type="subunit">
    <text>Heterooligomeric complex of about 850 to 900 kDa that forms two stacked rings, 12 to 16 nm in diameter.</text>
</comment>
<comment type="subcellular location">
    <subcellularLocation>
        <location>Cytoplasm</location>
    </subcellularLocation>
</comment>
<comment type="similarity">
    <text evidence="3">Belongs to the TCP-1 chaperonin family.</text>
</comment>
<protein>
    <recommendedName>
        <fullName>T-complex protein 1 subunit gamma</fullName>
        <shortName>TCP-1-gamma</shortName>
    </recommendedName>
    <alternativeName>
        <fullName>CCT-gamma</fullName>
    </alternativeName>
</protein>